<proteinExistence type="inferred from homology"/>
<organism>
    <name type="scientific">Oenothera berteroana</name>
    <name type="common">Bertero's evening primrose</name>
    <dbReference type="NCBI Taxonomy" id="3950"/>
    <lineage>
        <taxon>Eukaryota</taxon>
        <taxon>Viridiplantae</taxon>
        <taxon>Streptophyta</taxon>
        <taxon>Embryophyta</taxon>
        <taxon>Tracheophyta</taxon>
        <taxon>Spermatophyta</taxon>
        <taxon>Magnoliopsida</taxon>
        <taxon>eudicotyledons</taxon>
        <taxon>Gunneridae</taxon>
        <taxon>Pentapetalae</taxon>
        <taxon>rosids</taxon>
        <taxon>malvids</taxon>
        <taxon>Myrtales</taxon>
        <taxon>Onagraceae</taxon>
        <taxon>Onagroideae</taxon>
        <taxon>Onagreae</taxon>
        <taxon>Oenothera</taxon>
    </lineage>
</organism>
<gene>
    <name evidence="1" type="primary">TIC214</name>
    <name type="synonym">ycf1</name>
</gene>
<reference key="1">
    <citation type="journal article" date="1993" name="Curr. Genet.">
        <title>In-frame length mutations associated with short tandem repeats are located in unassigned open reading frames of Oenothera chloroplast DNA.</title>
        <authorList>
            <person name="Nimzyk R."/>
            <person name="Schoendorf T."/>
            <person name="Hachtel W."/>
        </authorList>
    </citation>
    <scope>NUCLEOTIDE SEQUENCE [GENOMIC DNA]</scope>
</reference>
<keyword id="KW-0150">Chloroplast</keyword>
<keyword id="KW-0472">Membrane</keyword>
<keyword id="KW-0934">Plastid</keyword>
<keyword id="KW-1001">Plastid inner membrane</keyword>
<keyword id="KW-0653">Protein transport</keyword>
<keyword id="KW-0812">Transmembrane</keyword>
<keyword id="KW-1133">Transmembrane helix</keyword>
<keyword id="KW-0813">Transport</keyword>
<evidence type="ECO:0000250" key="1">
    <source>
        <dbReference type="UniProtKB" id="P56785"/>
    </source>
</evidence>
<evidence type="ECO:0000255" key="2"/>
<evidence type="ECO:0000256" key="3">
    <source>
        <dbReference type="SAM" id="MobiDB-lite"/>
    </source>
</evidence>
<evidence type="ECO:0000305" key="4"/>
<feature type="chain" id="PRO_0000217304" description="Protein TIC 214">
    <location>
        <begin position="1"/>
        <end position="1005" status="greater than"/>
    </location>
</feature>
<feature type="transmembrane region" description="Helical" evidence="2">
    <location>
        <begin position="25"/>
        <end position="45"/>
    </location>
</feature>
<feature type="transmembrane region" description="Helical" evidence="2">
    <location>
        <begin position="67"/>
        <end position="87"/>
    </location>
</feature>
<feature type="transmembrane region" description="Helical" evidence="2">
    <location>
        <begin position="91"/>
        <end position="111"/>
    </location>
</feature>
<feature type="transmembrane region" description="Helical" evidence="2">
    <location>
        <begin position="131"/>
        <end position="151"/>
    </location>
</feature>
<feature type="transmembrane region" description="Helical" evidence="2">
    <location>
        <begin position="177"/>
        <end position="197"/>
    </location>
</feature>
<feature type="transmembrane region" description="Helical" evidence="2">
    <location>
        <begin position="304"/>
        <end position="324"/>
    </location>
</feature>
<feature type="region of interest" description="Disordered" evidence="3">
    <location>
        <begin position="457"/>
        <end position="481"/>
    </location>
</feature>
<feature type="region of interest" description="Disordered" evidence="3">
    <location>
        <begin position="767"/>
        <end position="833"/>
    </location>
</feature>
<feature type="compositionally biased region" description="Basic residues" evidence="3">
    <location>
        <begin position="783"/>
        <end position="810"/>
    </location>
</feature>
<feature type="compositionally biased region" description="Basic and acidic residues" evidence="3">
    <location>
        <begin position="811"/>
        <end position="824"/>
    </location>
</feature>
<feature type="non-terminal residue">
    <location>
        <position position="1005"/>
    </location>
</feature>
<comment type="function">
    <text evidence="1">Involved in protein precursor import into chloroplasts. May be part of an intermediate translocation complex acting as a protein-conducting channel at the inner envelope.</text>
</comment>
<comment type="subunit">
    <text evidence="1">Part of the Tic complex.</text>
</comment>
<comment type="subcellular location">
    <subcellularLocation>
        <location evidence="1">Plastid</location>
        <location evidence="1">Chloroplast inner membrane</location>
        <topology evidence="2">Multi-pass membrane protein</topology>
    </subcellularLocation>
</comment>
<comment type="similarity">
    <text evidence="4">Belongs to the TIC214 family.</text>
</comment>
<dbReference type="EMBL" id="X64614">
    <property type="protein sequence ID" value="CAA45895.1"/>
    <property type="molecule type" value="Genomic_DNA"/>
</dbReference>
<dbReference type="GO" id="GO:0009706">
    <property type="term" value="C:chloroplast inner membrane"/>
    <property type="evidence" value="ECO:0007669"/>
    <property type="project" value="UniProtKB-SubCell"/>
</dbReference>
<dbReference type="GO" id="GO:0015031">
    <property type="term" value="P:protein transport"/>
    <property type="evidence" value="ECO:0007669"/>
    <property type="project" value="UniProtKB-KW"/>
</dbReference>
<dbReference type="InterPro" id="IPR008896">
    <property type="entry name" value="TIC214"/>
</dbReference>
<dbReference type="PANTHER" id="PTHR23159">
    <property type="entry name" value="CENTROSOMAL PROTEIN 2"/>
    <property type="match status" value="1"/>
</dbReference>
<dbReference type="PANTHER" id="PTHR23159:SF66">
    <property type="entry name" value="OS04G0158400 PROTEIN"/>
    <property type="match status" value="1"/>
</dbReference>
<dbReference type="Pfam" id="PF05758">
    <property type="entry name" value="Ycf1"/>
    <property type="match status" value="3"/>
</dbReference>
<geneLocation type="chloroplast"/>
<name>TI214_OENBE</name>
<protein>
    <recommendedName>
        <fullName evidence="1">Protein TIC 214</fullName>
    </recommendedName>
    <alternativeName>
        <fullName evidence="1">Translocon at the inner envelope membrane of chloroplasts 214</fullName>
        <shortName evidence="1">AtTIC214</shortName>
    </alternativeName>
</protein>
<sequence>MTLKMFLPVNLVSVCMKLNNSVVMVGLYYGFISAFSIGSSYLFLLRPRFLNDDPDAIEKKASETAGFFTGQLLIFISILYGPLHLALGRPHTILLLLAPYFFFHFLSSNSGQYPSQRFAFPLLTKSMRNRSFQLVFLHSLLFQLFSLSVLGRPMLTRLSYIYIFRSNNKMLFVLSSFVGWLIGHILVLKWAGLVFVWLLKFIRSKTMKYITCNVLIPATKYIIEKWRNSFVAGLIREILAMKQVESALVRIKNSRLLDDVRWWIRGSGLISGLKINIRFYARLILRGFENVYVGAKFRQDMEHLFSIILFAFFLLYLDRTPLLYADPADKKLQLQRKLSNETQAAREEKELEERLTEKFEAQRRAQRAAQRKALQEFKQGVVESYLANQAAKDENQIQAQKDEKQIQAEKKATIRAEQVVQYTFGLIEAQRREMEIEAARAMQEAYKGMLAAEEEDVEEGVQEKQEGFPEEPISPSEEREENPKLLILKEKISILTEKISILTEKNDLFSFEIPIITSLFDPQKPLRPLRYIKTCAGVEKAVKNEMSQYFFYPCRSDGKQRLCFTYPPSLATFWEMIQRKMASRFPRIYTKAKWRALRGSAPGSYRQWISRNKKKKNSLSTEFQNRIQTLDQKKSLLNVLARRKRSSLQNVLETRKRLCNYKTKKEYLPEIADPFLTGALRGKSDPEVYDGVRKTSEIKVVFLKNNITMATLGNKNDDDLREEKNAISLLSRMKNPVNKLHLLFVNERDYPFVKPLVNRINGPAVPKKKKTISKSKQNEIKSKQKKVKSKQKKVKSKQKKVKSKQKKVKSKQNEIKSKQNEIKSKQKKVKRKQNEIKSKLNEVKRKQNEIYPKGVKFNATPKTEINPHGIRFDAATIEKYSFATGYSYRPPSFHDIIFKAFVTEPQRNKKKVIELEEEINKQVPRWSYQLIDELEQLEGAEGETQFSDHEIRILPFKRVSVFTEKEAKKKPLIDEEGNYVRHKKTYAVRFLGHMSDFRRGLIKGS</sequence>
<accession>P31563</accession>